<keyword id="KW-0067">ATP-binding</keyword>
<keyword id="KW-1035">Host cytoplasm</keyword>
<keyword id="KW-0378">Hydrolase</keyword>
<keyword id="KW-0460">Magnesium</keyword>
<keyword id="KW-0479">Metal-binding</keyword>
<keyword id="KW-0547">Nucleotide-binding</keyword>
<keyword id="KW-0694">RNA-binding</keyword>
<dbReference type="EC" id="3.6.4.-" evidence="1"/>
<dbReference type="EMBL" id="EF672622">
    <property type="protein sequence ID" value="ABV53303.1"/>
    <property type="molecule type" value="Genomic_RNA"/>
</dbReference>
<dbReference type="SMR" id="B3SRX8"/>
<dbReference type="Proteomes" id="UP000006580">
    <property type="component" value="Genome"/>
</dbReference>
<dbReference type="GO" id="GO:0030430">
    <property type="term" value="C:host cell cytoplasm"/>
    <property type="evidence" value="ECO:0007669"/>
    <property type="project" value="UniProtKB-SubCell"/>
</dbReference>
<dbReference type="GO" id="GO:0005524">
    <property type="term" value="F:ATP binding"/>
    <property type="evidence" value="ECO:0007669"/>
    <property type="project" value="UniProtKB-KW"/>
</dbReference>
<dbReference type="GO" id="GO:0046872">
    <property type="term" value="F:metal ion binding"/>
    <property type="evidence" value="ECO:0007669"/>
    <property type="project" value="UniProtKB-UniRule"/>
</dbReference>
<dbReference type="GO" id="GO:0004550">
    <property type="term" value="F:nucleoside diphosphate kinase activity"/>
    <property type="evidence" value="ECO:0007669"/>
    <property type="project" value="InterPro"/>
</dbReference>
<dbReference type="GO" id="GO:0017111">
    <property type="term" value="F:ribonucleoside triphosphate phosphatase activity"/>
    <property type="evidence" value="ECO:0007669"/>
    <property type="project" value="InterPro"/>
</dbReference>
<dbReference type="GO" id="GO:0003723">
    <property type="term" value="F:RNA binding"/>
    <property type="evidence" value="ECO:0007669"/>
    <property type="project" value="UniProtKB-UniRule"/>
</dbReference>
<dbReference type="GO" id="GO:0019079">
    <property type="term" value="P:viral genome replication"/>
    <property type="evidence" value="ECO:0007669"/>
    <property type="project" value="UniProtKB-UniRule"/>
</dbReference>
<dbReference type="Gene3D" id="3.30.428.20">
    <property type="entry name" value="Rotavirus NSP2 fragment, C-terminal domain"/>
    <property type="match status" value="1"/>
</dbReference>
<dbReference type="Gene3D" id="3.90.1400.10">
    <property type="entry name" value="Rotavirus NSP2 fragment, N-terminal domain"/>
    <property type="match status" value="1"/>
</dbReference>
<dbReference type="HAMAP" id="MF_04089">
    <property type="entry name" value="ROTA_NSP2"/>
    <property type="match status" value="1"/>
</dbReference>
<dbReference type="InterPro" id="IPR048306">
    <property type="entry name" value="Rota_NS35_C"/>
</dbReference>
<dbReference type="InterPro" id="IPR048573">
    <property type="entry name" value="Rota_NS35_N"/>
</dbReference>
<dbReference type="InterPro" id="IPR003668">
    <property type="entry name" value="Rotavirus_NSP2"/>
</dbReference>
<dbReference type="InterPro" id="IPR024076">
    <property type="entry name" value="Rotavirus_NSP2_C"/>
</dbReference>
<dbReference type="InterPro" id="IPR024068">
    <property type="entry name" value="Rotavirus_NSP2_N"/>
</dbReference>
<dbReference type="Pfam" id="PF02509">
    <property type="entry name" value="Rota_NS35_C"/>
    <property type="match status" value="1"/>
</dbReference>
<dbReference type="Pfam" id="PF21067">
    <property type="entry name" value="Rota_NS35_N"/>
    <property type="match status" value="1"/>
</dbReference>
<dbReference type="SUPFAM" id="SSF75347">
    <property type="entry name" value="Rotavirus NSP2 fragment, C-terminal domain"/>
    <property type="match status" value="1"/>
</dbReference>
<dbReference type="SUPFAM" id="SSF75574">
    <property type="entry name" value="Rotavirus NSP2 fragment, N-terminal domain"/>
    <property type="match status" value="1"/>
</dbReference>
<protein>
    <recommendedName>
        <fullName evidence="1">Non-structural protein 2</fullName>
        <shortName evidence="1">NSP2</shortName>
        <ecNumber evidence="1">3.6.4.-</ecNumber>
    </recommendedName>
    <alternativeName>
        <fullName evidence="1">NCVP3</fullName>
    </alternativeName>
    <alternativeName>
        <fullName evidence="1">Non-structural RNA-binding protein 35</fullName>
        <shortName evidence="1">NS35</shortName>
    </alternativeName>
</protein>
<evidence type="ECO:0000255" key="1">
    <source>
        <dbReference type="HAMAP-Rule" id="MF_04089"/>
    </source>
</evidence>
<organismHost>
    <name type="scientific">Homo sapiens</name>
    <name type="common">Human</name>
    <dbReference type="NCBI Taxonomy" id="9606"/>
</organismHost>
<proteinExistence type="inferred from homology"/>
<organism>
    <name type="scientific">Rotavirus A (isolate RVA/Human/United States/WI61/1983/G9P1A[8])</name>
    <name type="common">RV-A</name>
    <dbReference type="NCBI Taxonomy" id="578830"/>
    <lineage>
        <taxon>Viruses</taxon>
        <taxon>Riboviria</taxon>
        <taxon>Orthornavirae</taxon>
        <taxon>Duplornaviricota</taxon>
        <taxon>Resentoviricetes</taxon>
        <taxon>Reovirales</taxon>
        <taxon>Sedoreoviridae</taxon>
        <taxon>Rotavirus</taxon>
        <taxon>Rotavirus A</taxon>
    </lineage>
</organism>
<comment type="function">
    <text evidence="1">Participates in replication and packaging of the viral genome. Plays a crucial role, together with NSP5, in the formation of virus factories (viroplasms), which are large inclusions in the host cytoplasm where replication intermediates are assembled and viral RNA replication takes place. Displays ssRNA binding, NTPase, RNA triphosphatase (RTPase) and ATP-independent helix-unwinding activities. The unwinding activity may prepare and organize plus-strand RNAs for packaging and replication by removing interfering secondary structures. The RTPase activity plays a role in the removal of the gamma-phosphate from the rotavirus RNA minus strands of dsRNA genome segments. Participates in the selective exclusion of host proteins from stress granules (SG) and P bodies (PB). Also participates in the sequestration of these remodeled organelles in viral factories.</text>
</comment>
<comment type="cofactor">
    <cofactor evidence="1">
        <name>Mg(2+)</name>
        <dbReference type="ChEBI" id="CHEBI:18420"/>
    </cofactor>
</comment>
<comment type="subunit">
    <text evidence="1">Homooctamer. Interacts with VP1; this interaction is weak. Interacts with NSP5; this interaction leads to up-regulation of NSP5 phosphorylation and formation of viral factories. Interacts with host DCP1A, DCP1B, DDX6, EDC4 and EIF2S1/eIF2-alpha; these interactions are probably part of the sequestration of some host SGs and PBs proteins in viral factories.</text>
</comment>
<comment type="subcellular location">
    <subcellularLocation>
        <location evidence="1">Host cytoplasm</location>
    </subcellularLocation>
    <text evidence="1">Found in spherical cytoplasmic structures, called viral factories, that appear early after infection and are the site of viral replication and packaging.</text>
</comment>
<comment type="similarity">
    <text evidence="1">Belongs to the rotavirus NSP2 family.</text>
</comment>
<sequence length="317" mass="36509">MAELACFCYPHLENDSYKFIPFNNLAIKCMLTAKVDKKDQDKFYNSIIYGIAPPPQFKKRYNTSDNSRGMNYETVMFNKVAVLICEALNSLKVTQSDVANVLSRVVSVRHLENLALRKENHQDVLFHSKELLLKSVLIAIGQSKEIETTATAEGGEIVFQNAAFTMWKLTYLDHELMPILDQNFIEYKITLNEDKPISDVCVKELVAELRWQYNRFAVITHGKGHYRVVKYSSVANHADRVFATYKNITKNGNAIDFNLLDQRIIWQNWYAFTSSMKQGNTLDVCKKLLFQKIKQEKNPFKGLSTDRKMDEVSHVGI</sequence>
<feature type="chain" id="PRO_0000369531" description="Non-structural protein 2">
    <location>
        <begin position="1"/>
        <end position="317"/>
    </location>
</feature>
<feature type="region of interest" description="RNA-binding" evidence="1">
    <location>
        <begin position="205"/>
        <end position="241"/>
    </location>
</feature>
<feature type="active site" description="For NTPase and RTPase activities" evidence="1">
    <location>
        <position position="225"/>
    </location>
</feature>
<feature type="binding site" evidence="1">
    <location>
        <begin position="107"/>
        <end position="109"/>
    </location>
    <ligand>
        <name>ATP</name>
        <dbReference type="ChEBI" id="CHEBI:30616"/>
    </ligand>
</feature>
<feature type="binding site" evidence="1">
    <location>
        <position position="188"/>
    </location>
    <ligand>
        <name>ATP</name>
        <dbReference type="ChEBI" id="CHEBI:30616"/>
    </ligand>
</feature>
<feature type="binding site" evidence="1">
    <location>
        <begin position="221"/>
        <end position="223"/>
    </location>
    <ligand>
        <name>ATP</name>
        <dbReference type="ChEBI" id="CHEBI:30616"/>
    </ligand>
</feature>
<feature type="binding site" evidence="1">
    <location>
        <position position="227"/>
    </location>
    <ligand>
        <name>ATP</name>
        <dbReference type="ChEBI" id="CHEBI:30616"/>
    </ligand>
</feature>
<reference key="1">
    <citation type="submission" date="2007-06" db="EMBL/GenBank/DDBJ databases">
        <title>Characterization of preferred gene constellations of group A rotavirus.</title>
        <authorList>
            <person name="Heiman E.M."/>
            <person name="McDonald S.M."/>
            <person name="Barro M."/>
            <person name="Taraporewala Z.F."/>
            <person name="Bar-Magen T."/>
            <person name="Patton J.T."/>
        </authorList>
    </citation>
    <scope>NUCLEOTIDE SEQUENCE [GENOMIC RNA]</scope>
</reference>
<name>NSP2_ROTWI</name>
<accession>B3SRX8</accession>